<evidence type="ECO:0000255" key="1">
    <source>
        <dbReference type="HAMAP-Rule" id="MF_01333"/>
    </source>
</evidence>
<evidence type="ECO:0000305" key="2"/>
<sequence>MTETLETPATKIVPRLKTKYAESIKATLQDEFKYENVNQVPRLVKVVVNMGVGDAAKDSKLIDGAVRDLTQITGQKPQVTKARKSIAQFKLREGMPIGAHATLRGDRMWEFVDRLVSLALPRIRDFRGLSGKQFDGNGNYTFGLTEQVMFHEIDQDKIDRVRGMDITVVTTAKTDDEGRALLKALGFPFKTEA</sequence>
<name>RL5_PSECP</name>
<comment type="function">
    <text evidence="1">This is one of the proteins that bind and probably mediate the attachment of the 5S RNA into the large ribosomal subunit, where it forms part of the central protuberance. In the 70S ribosome it contacts protein S13 of the 30S subunit (bridge B1b), connecting the 2 subunits; this bridge is implicated in subunit movement. Contacts the P site tRNA; the 5S rRNA and some of its associated proteins might help stabilize positioning of ribosome-bound tRNAs.</text>
</comment>
<comment type="subunit">
    <text evidence="1">Part of the 50S ribosomal subunit; part of the 5S rRNA/L5/L18/L25 subcomplex. Contacts the 5S rRNA and the P site tRNA. Forms a bridge to the 30S subunit in the 70S ribosome.</text>
</comment>
<comment type="similarity">
    <text evidence="1">Belongs to the universal ribosomal protein uL5 family.</text>
</comment>
<gene>
    <name evidence="1" type="primary">rplE</name>
    <name type="ordered locus">Achl_2675</name>
</gene>
<accession>B8HCZ4</accession>
<protein>
    <recommendedName>
        <fullName evidence="1">Large ribosomal subunit protein uL5</fullName>
    </recommendedName>
    <alternativeName>
        <fullName evidence="2">50S ribosomal protein L5</fullName>
    </alternativeName>
</protein>
<keyword id="KW-0687">Ribonucleoprotein</keyword>
<keyword id="KW-0689">Ribosomal protein</keyword>
<keyword id="KW-0694">RNA-binding</keyword>
<keyword id="KW-0699">rRNA-binding</keyword>
<keyword id="KW-0820">tRNA-binding</keyword>
<feature type="chain" id="PRO_1000166106" description="Large ribosomal subunit protein uL5">
    <location>
        <begin position="1"/>
        <end position="193"/>
    </location>
</feature>
<dbReference type="EMBL" id="CP001341">
    <property type="protein sequence ID" value="ACL40640.1"/>
    <property type="molecule type" value="Genomic_DNA"/>
</dbReference>
<dbReference type="RefSeq" id="WP_015937844.1">
    <property type="nucleotide sequence ID" value="NC_011886.1"/>
</dbReference>
<dbReference type="SMR" id="B8HCZ4"/>
<dbReference type="STRING" id="452863.Achl_2675"/>
<dbReference type="KEGG" id="ach:Achl_2675"/>
<dbReference type="eggNOG" id="COG0094">
    <property type="taxonomic scope" value="Bacteria"/>
</dbReference>
<dbReference type="HOGENOM" id="CLU_061015_2_1_11"/>
<dbReference type="OrthoDB" id="9806626at2"/>
<dbReference type="Proteomes" id="UP000002505">
    <property type="component" value="Chromosome"/>
</dbReference>
<dbReference type="GO" id="GO:1990904">
    <property type="term" value="C:ribonucleoprotein complex"/>
    <property type="evidence" value="ECO:0007669"/>
    <property type="project" value="UniProtKB-KW"/>
</dbReference>
<dbReference type="GO" id="GO:0005840">
    <property type="term" value="C:ribosome"/>
    <property type="evidence" value="ECO:0007669"/>
    <property type="project" value="UniProtKB-KW"/>
</dbReference>
<dbReference type="GO" id="GO:0019843">
    <property type="term" value="F:rRNA binding"/>
    <property type="evidence" value="ECO:0007669"/>
    <property type="project" value="UniProtKB-UniRule"/>
</dbReference>
<dbReference type="GO" id="GO:0003735">
    <property type="term" value="F:structural constituent of ribosome"/>
    <property type="evidence" value="ECO:0007669"/>
    <property type="project" value="InterPro"/>
</dbReference>
<dbReference type="GO" id="GO:0000049">
    <property type="term" value="F:tRNA binding"/>
    <property type="evidence" value="ECO:0007669"/>
    <property type="project" value="UniProtKB-UniRule"/>
</dbReference>
<dbReference type="GO" id="GO:0006412">
    <property type="term" value="P:translation"/>
    <property type="evidence" value="ECO:0007669"/>
    <property type="project" value="UniProtKB-UniRule"/>
</dbReference>
<dbReference type="FunFam" id="3.30.1440.10:FF:000001">
    <property type="entry name" value="50S ribosomal protein L5"/>
    <property type="match status" value="1"/>
</dbReference>
<dbReference type="Gene3D" id="3.30.1440.10">
    <property type="match status" value="1"/>
</dbReference>
<dbReference type="HAMAP" id="MF_01333_B">
    <property type="entry name" value="Ribosomal_uL5_B"/>
    <property type="match status" value="1"/>
</dbReference>
<dbReference type="InterPro" id="IPR002132">
    <property type="entry name" value="Ribosomal_uL5"/>
</dbReference>
<dbReference type="InterPro" id="IPR020930">
    <property type="entry name" value="Ribosomal_uL5_bac-type"/>
</dbReference>
<dbReference type="InterPro" id="IPR031309">
    <property type="entry name" value="Ribosomal_uL5_C"/>
</dbReference>
<dbReference type="InterPro" id="IPR022803">
    <property type="entry name" value="Ribosomal_uL5_dom_sf"/>
</dbReference>
<dbReference type="InterPro" id="IPR031310">
    <property type="entry name" value="Ribosomal_uL5_N"/>
</dbReference>
<dbReference type="NCBIfam" id="NF000585">
    <property type="entry name" value="PRK00010.1"/>
    <property type="match status" value="1"/>
</dbReference>
<dbReference type="PANTHER" id="PTHR11994">
    <property type="entry name" value="60S RIBOSOMAL PROTEIN L11-RELATED"/>
    <property type="match status" value="1"/>
</dbReference>
<dbReference type="Pfam" id="PF00281">
    <property type="entry name" value="Ribosomal_L5"/>
    <property type="match status" value="1"/>
</dbReference>
<dbReference type="Pfam" id="PF00673">
    <property type="entry name" value="Ribosomal_L5_C"/>
    <property type="match status" value="1"/>
</dbReference>
<dbReference type="PIRSF" id="PIRSF002161">
    <property type="entry name" value="Ribosomal_L5"/>
    <property type="match status" value="1"/>
</dbReference>
<dbReference type="SUPFAM" id="SSF55282">
    <property type="entry name" value="RL5-like"/>
    <property type="match status" value="1"/>
</dbReference>
<proteinExistence type="inferred from homology"/>
<reference key="1">
    <citation type="submission" date="2009-01" db="EMBL/GenBank/DDBJ databases">
        <title>Complete sequence of chromosome of Arthrobacter chlorophenolicus A6.</title>
        <authorList>
            <consortium name="US DOE Joint Genome Institute"/>
            <person name="Lucas S."/>
            <person name="Copeland A."/>
            <person name="Lapidus A."/>
            <person name="Glavina del Rio T."/>
            <person name="Tice H."/>
            <person name="Bruce D."/>
            <person name="Goodwin L."/>
            <person name="Pitluck S."/>
            <person name="Goltsman E."/>
            <person name="Clum A."/>
            <person name="Larimer F."/>
            <person name="Land M."/>
            <person name="Hauser L."/>
            <person name="Kyrpides N."/>
            <person name="Mikhailova N."/>
            <person name="Jansson J."/>
            <person name="Richardson P."/>
        </authorList>
    </citation>
    <scope>NUCLEOTIDE SEQUENCE [LARGE SCALE GENOMIC DNA]</scope>
    <source>
        <strain>ATCC 700700 / DSM 12829 / CIP 107037 / JCM 12360 / KCTC 9906 / NCIMB 13794 / A6</strain>
    </source>
</reference>
<organism>
    <name type="scientific">Pseudarthrobacter chlorophenolicus (strain ATCC 700700 / DSM 12829 / CIP 107037 / JCM 12360 / KCTC 9906 / NCIMB 13794 / A6)</name>
    <name type="common">Arthrobacter chlorophenolicus</name>
    <dbReference type="NCBI Taxonomy" id="452863"/>
    <lineage>
        <taxon>Bacteria</taxon>
        <taxon>Bacillati</taxon>
        <taxon>Actinomycetota</taxon>
        <taxon>Actinomycetes</taxon>
        <taxon>Micrococcales</taxon>
        <taxon>Micrococcaceae</taxon>
        <taxon>Pseudarthrobacter</taxon>
    </lineage>
</organism>